<reference key="1">
    <citation type="journal article" date="2023" name="Proc. Natl. Acad. Sci. U.S.A.">
        <title>Horizontal gene transfer underlies the painful stings of asp caterpillars (Lepidoptera: Megalopygidae).</title>
        <authorList>
            <person name="Walker A.A."/>
            <person name="Robinson S.D."/>
            <person name="Merritt D.J."/>
            <person name="Cardoso F.C."/>
            <person name="Goudarzi M.H."/>
            <person name="Mercedes R.S."/>
            <person name="Eagles D.A."/>
            <person name="Cooper P."/>
            <person name="Zdenek C.N."/>
            <person name="Fry B.G."/>
            <person name="Hall D.W."/>
            <person name="Vetter I."/>
            <person name="King G.F."/>
        </authorList>
    </citation>
    <scope>NUCLEOTIDE SEQUENCE [MRNA]</scope>
    <scope>MASS SPECTROMETRY</scope>
    <scope>RECOMBINANT EXPRESSION</scope>
    <scope>SUBCELLULAR LOCATION</scope>
    <scope>TISSUE SPECIFICITY</scope>
    <scope>DEVELOPMENTAL STAGE</scope>
    <source>
        <tissue>Venom</tissue>
    </source>
</reference>
<keyword id="KW-1015">Disulfide bond</keyword>
<keyword id="KW-0964">Secreted</keyword>
<keyword id="KW-0732">Signal</keyword>
<keyword id="KW-0800">Toxin</keyword>
<evidence type="ECO:0000255" key="1"/>
<evidence type="ECO:0000269" key="2">
    <source>
    </source>
</evidence>
<evidence type="ECO:0000303" key="3">
    <source>
    </source>
</evidence>
<evidence type="ECO:0000305" key="4"/>
<evidence type="ECO:0000305" key="5">
    <source>
    </source>
</evidence>
<evidence type="ECO:0000312" key="6">
    <source>
        <dbReference type="EMBL" id="WJJ70362.1"/>
    </source>
</evidence>
<organism>
    <name type="scientific">Megalopyge opercularis</name>
    <name type="common">Southern flannel moth</name>
    <name type="synonym">Phalaena opercularis</name>
    <dbReference type="NCBI Taxonomy" id="1113279"/>
    <lineage>
        <taxon>Eukaryota</taxon>
        <taxon>Metazoa</taxon>
        <taxon>Ecdysozoa</taxon>
        <taxon>Arthropoda</taxon>
        <taxon>Hexapoda</taxon>
        <taxon>Insecta</taxon>
        <taxon>Pterygota</taxon>
        <taxon>Neoptera</taxon>
        <taxon>Endopterygota</taxon>
        <taxon>Lepidoptera</taxon>
        <taxon>Glossata</taxon>
        <taxon>Ditrysia</taxon>
        <taxon>Zygaenoidea</taxon>
        <taxon>Megalopygidae</taxon>
        <taxon>Megalopyge</taxon>
    </lineage>
</organism>
<accession>P0DXW3</accession>
<sequence>MYRETFVFCVLLAVVSANVEMRDLEEKPEKYKGVNCCYVSAIQECIPVGETRPFKHECKGWTCNKDNLLEVSCGKVLVEHYVEDKTAPYPHCCPVAKA</sequence>
<protein>
    <recommendedName>
        <fullName evidence="3">U-megalopygitoxin(1)-Mo1</fullName>
        <shortName evidence="3">U-MPTX(1)-Mo1</shortName>
        <shortName evidence="6">U-MPTX.1-1</shortName>
    </recommendedName>
</protein>
<comment type="function">
    <text evidence="4">Probable toxin.</text>
</comment>
<comment type="subcellular location">
    <subcellularLocation>
        <location evidence="2">Secreted</location>
    </subcellularLocation>
</comment>
<comment type="tissue specificity">
    <text evidence="2">Expressed by the venom apparatus.</text>
</comment>
<comment type="developmental stage">
    <text evidence="2">Larvae.</text>
</comment>
<comment type="PTM">
    <text evidence="5">Contains 4 disulfide bonds.</text>
</comment>
<comment type="mass spectrometry">
    <text>Monoisotopic mass.</text>
</comment>
<comment type="similarity">
    <text evidence="4">Belongs to the caterpillar 1 family.</text>
</comment>
<dbReference type="EMBL" id="OP514844">
    <property type="protein sequence ID" value="WJJ70362.1"/>
    <property type="molecule type" value="mRNA"/>
</dbReference>
<dbReference type="GO" id="GO:0005576">
    <property type="term" value="C:extracellular region"/>
    <property type="evidence" value="ECO:0007669"/>
    <property type="project" value="UniProtKB-SubCell"/>
</dbReference>
<dbReference type="GO" id="GO:0090729">
    <property type="term" value="F:toxin activity"/>
    <property type="evidence" value="ECO:0007669"/>
    <property type="project" value="UniProtKB-KW"/>
</dbReference>
<dbReference type="InterPro" id="IPR029277">
    <property type="entry name" value="SVWC_dom"/>
</dbReference>
<dbReference type="Pfam" id="PF15430">
    <property type="entry name" value="SVWC"/>
    <property type="match status" value="1"/>
</dbReference>
<name>TXU11_MEGOP</name>
<proteinExistence type="evidence at protein level"/>
<feature type="signal peptide" evidence="1">
    <location>
        <begin position="1"/>
        <end position="17"/>
    </location>
</feature>
<feature type="chain" id="PRO_0000461521" description="U-megalopygitoxin(1)-Mo1" evidence="5">
    <location>
        <begin position="18"/>
        <end position="98"/>
    </location>
</feature>